<sequence length="222" mass="24846">MRIHDFDPDNRPRERLLRSGAASLSPAELLAIILRTGTKNLNIVDTCNELIARYSLEKLANITLEELKKVKGIGDAKAMQIVAIFELNKRLHYSRNLNKKIQAARDVFEYMAGRVPDETKEHLFVLHLNTKNQIIKTELVSVGTLNAALIHPREVFKSAIKESSHAIILVHNHPSGDVEPSNADKQVTDLLKQASTVIQIDLLDHIIIGKTGCFSFRESGLL</sequence>
<evidence type="ECO:0000255" key="1">
    <source>
        <dbReference type="PROSITE-ProRule" id="PRU01182"/>
    </source>
</evidence>
<evidence type="ECO:0000305" key="2"/>
<organism>
    <name type="scientific">Pelodictyon phaeoclathratiforme (strain DSM 5477 / BU-1)</name>
    <dbReference type="NCBI Taxonomy" id="324925"/>
    <lineage>
        <taxon>Bacteria</taxon>
        <taxon>Pseudomonadati</taxon>
        <taxon>Chlorobiota</taxon>
        <taxon>Chlorobiia</taxon>
        <taxon>Chlorobiales</taxon>
        <taxon>Chlorobiaceae</taxon>
        <taxon>Chlorobium/Pelodictyon group</taxon>
        <taxon>Pelodictyon</taxon>
    </lineage>
</organism>
<comment type="similarity">
    <text evidence="2">Belongs to the UPF0758 family.</text>
</comment>
<dbReference type="EMBL" id="CP001110">
    <property type="protein sequence ID" value="ACF43222.1"/>
    <property type="molecule type" value="Genomic_DNA"/>
</dbReference>
<dbReference type="RefSeq" id="WP_012507717.1">
    <property type="nucleotide sequence ID" value="NC_011060.1"/>
</dbReference>
<dbReference type="SMR" id="B4SF75"/>
<dbReference type="STRING" id="324925.Ppha_0935"/>
<dbReference type="KEGG" id="pph:Ppha_0935"/>
<dbReference type="eggNOG" id="COG2003">
    <property type="taxonomic scope" value="Bacteria"/>
</dbReference>
<dbReference type="HOGENOM" id="CLU_073529_0_2_10"/>
<dbReference type="OrthoDB" id="9804482at2"/>
<dbReference type="Proteomes" id="UP000002724">
    <property type="component" value="Chromosome"/>
</dbReference>
<dbReference type="GO" id="GO:0046872">
    <property type="term" value="F:metal ion binding"/>
    <property type="evidence" value="ECO:0007669"/>
    <property type="project" value="UniProtKB-KW"/>
</dbReference>
<dbReference type="GO" id="GO:0008237">
    <property type="term" value="F:metallopeptidase activity"/>
    <property type="evidence" value="ECO:0007669"/>
    <property type="project" value="UniProtKB-KW"/>
</dbReference>
<dbReference type="GO" id="GO:0006508">
    <property type="term" value="P:proteolysis"/>
    <property type="evidence" value="ECO:0007669"/>
    <property type="project" value="UniProtKB-KW"/>
</dbReference>
<dbReference type="CDD" id="cd08071">
    <property type="entry name" value="MPN_DUF2466"/>
    <property type="match status" value="1"/>
</dbReference>
<dbReference type="Gene3D" id="1.10.150.20">
    <property type="entry name" value="5' to 3' exonuclease, C-terminal subdomain"/>
    <property type="match status" value="1"/>
</dbReference>
<dbReference type="Gene3D" id="3.40.140.10">
    <property type="entry name" value="Cytidine Deaminase, domain 2"/>
    <property type="match status" value="1"/>
</dbReference>
<dbReference type="InterPro" id="IPR037518">
    <property type="entry name" value="MPN"/>
</dbReference>
<dbReference type="InterPro" id="IPR025657">
    <property type="entry name" value="RadC_JAB"/>
</dbReference>
<dbReference type="InterPro" id="IPR010994">
    <property type="entry name" value="RuvA_2-like"/>
</dbReference>
<dbReference type="InterPro" id="IPR001405">
    <property type="entry name" value="UPF0758"/>
</dbReference>
<dbReference type="InterPro" id="IPR020891">
    <property type="entry name" value="UPF0758_CS"/>
</dbReference>
<dbReference type="InterPro" id="IPR046778">
    <property type="entry name" value="UPF0758_N"/>
</dbReference>
<dbReference type="NCBIfam" id="NF000642">
    <property type="entry name" value="PRK00024.1"/>
    <property type="match status" value="1"/>
</dbReference>
<dbReference type="NCBIfam" id="TIGR00608">
    <property type="entry name" value="radc"/>
    <property type="match status" value="1"/>
</dbReference>
<dbReference type="PANTHER" id="PTHR30471">
    <property type="entry name" value="DNA REPAIR PROTEIN RADC"/>
    <property type="match status" value="1"/>
</dbReference>
<dbReference type="PANTHER" id="PTHR30471:SF3">
    <property type="entry name" value="UPF0758 PROTEIN YEES-RELATED"/>
    <property type="match status" value="1"/>
</dbReference>
<dbReference type="Pfam" id="PF04002">
    <property type="entry name" value="RadC"/>
    <property type="match status" value="1"/>
</dbReference>
<dbReference type="Pfam" id="PF20582">
    <property type="entry name" value="UPF0758_N"/>
    <property type="match status" value="1"/>
</dbReference>
<dbReference type="SUPFAM" id="SSF47781">
    <property type="entry name" value="RuvA domain 2-like"/>
    <property type="match status" value="1"/>
</dbReference>
<dbReference type="PROSITE" id="PS50249">
    <property type="entry name" value="MPN"/>
    <property type="match status" value="1"/>
</dbReference>
<dbReference type="PROSITE" id="PS01302">
    <property type="entry name" value="UPF0758"/>
    <property type="match status" value="1"/>
</dbReference>
<gene>
    <name type="ordered locus">Ppha_0935</name>
</gene>
<proteinExistence type="inferred from homology"/>
<keyword id="KW-0378">Hydrolase</keyword>
<keyword id="KW-0479">Metal-binding</keyword>
<keyword id="KW-0482">Metalloprotease</keyword>
<keyword id="KW-0645">Protease</keyword>
<keyword id="KW-1185">Reference proteome</keyword>
<keyword id="KW-0862">Zinc</keyword>
<protein>
    <recommendedName>
        <fullName>UPF0758 protein Ppha_0935</fullName>
    </recommendedName>
</protein>
<name>Y935_PELPB</name>
<accession>B4SF75</accession>
<feature type="chain" id="PRO_1000089830" description="UPF0758 protein Ppha_0935">
    <location>
        <begin position="1"/>
        <end position="222"/>
    </location>
</feature>
<feature type="domain" description="MPN" evidence="1">
    <location>
        <begin position="100"/>
        <end position="222"/>
    </location>
</feature>
<feature type="short sequence motif" description="JAMM motif" evidence="1">
    <location>
        <begin position="171"/>
        <end position="184"/>
    </location>
</feature>
<feature type="binding site" evidence="1">
    <location>
        <position position="171"/>
    </location>
    <ligand>
        <name>Zn(2+)</name>
        <dbReference type="ChEBI" id="CHEBI:29105"/>
        <note>catalytic</note>
    </ligand>
</feature>
<feature type="binding site" evidence="1">
    <location>
        <position position="173"/>
    </location>
    <ligand>
        <name>Zn(2+)</name>
        <dbReference type="ChEBI" id="CHEBI:29105"/>
        <note>catalytic</note>
    </ligand>
</feature>
<feature type="binding site" evidence="1">
    <location>
        <position position="184"/>
    </location>
    <ligand>
        <name>Zn(2+)</name>
        <dbReference type="ChEBI" id="CHEBI:29105"/>
        <note>catalytic</note>
    </ligand>
</feature>
<reference key="1">
    <citation type="submission" date="2008-06" db="EMBL/GenBank/DDBJ databases">
        <title>Complete sequence of Pelodictyon phaeoclathratiforme BU-1.</title>
        <authorList>
            <consortium name="US DOE Joint Genome Institute"/>
            <person name="Lucas S."/>
            <person name="Copeland A."/>
            <person name="Lapidus A."/>
            <person name="Glavina del Rio T."/>
            <person name="Dalin E."/>
            <person name="Tice H."/>
            <person name="Bruce D."/>
            <person name="Goodwin L."/>
            <person name="Pitluck S."/>
            <person name="Schmutz J."/>
            <person name="Larimer F."/>
            <person name="Land M."/>
            <person name="Hauser L."/>
            <person name="Kyrpides N."/>
            <person name="Mikhailova N."/>
            <person name="Liu Z."/>
            <person name="Li T."/>
            <person name="Zhao F."/>
            <person name="Overmann J."/>
            <person name="Bryant D.A."/>
            <person name="Richardson P."/>
        </authorList>
    </citation>
    <scope>NUCLEOTIDE SEQUENCE [LARGE SCALE GENOMIC DNA]</scope>
    <source>
        <strain>DSM 5477 / BU-1</strain>
    </source>
</reference>